<organism>
    <name type="scientific">Oryctolagus cuniculus</name>
    <name type="common">Rabbit</name>
    <dbReference type="NCBI Taxonomy" id="9986"/>
    <lineage>
        <taxon>Eukaryota</taxon>
        <taxon>Metazoa</taxon>
        <taxon>Chordata</taxon>
        <taxon>Craniata</taxon>
        <taxon>Vertebrata</taxon>
        <taxon>Euteleostomi</taxon>
        <taxon>Mammalia</taxon>
        <taxon>Eutheria</taxon>
        <taxon>Euarchontoglires</taxon>
        <taxon>Glires</taxon>
        <taxon>Lagomorpha</taxon>
        <taxon>Leporidae</taxon>
        <taxon>Oryctolagus</taxon>
    </lineage>
</organism>
<name>RS30_RABIT</name>
<gene>
    <name type="primary">FAU</name>
</gene>
<evidence type="ECO:0000250" key="1">
    <source>
        <dbReference type="UniProtKB" id="P62861"/>
    </source>
</evidence>
<evidence type="ECO:0000250" key="2">
    <source>
        <dbReference type="UniProtKB" id="P62862"/>
    </source>
</evidence>
<evidence type="ECO:0000255" key="3">
    <source>
        <dbReference type="PROSITE-ProRule" id="PRU00214"/>
    </source>
</evidence>
<evidence type="ECO:0000269" key="4">
    <source>
    </source>
</evidence>
<evidence type="ECO:0000269" key="5">
    <source>
    </source>
</evidence>
<evidence type="ECO:0000269" key="6">
    <source>
    </source>
</evidence>
<evidence type="ECO:0000269" key="7">
    <source>
    </source>
</evidence>
<evidence type="ECO:0000269" key="8">
    <source>
    </source>
</evidence>
<evidence type="ECO:0000269" key="9">
    <source>
    </source>
</evidence>
<evidence type="ECO:0000269" key="10">
    <source>
    </source>
</evidence>
<evidence type="ECO:0000269" key="11">
    <source>
    </source>
</evidence>
<evidence type="ECO:0000269" key="12">
    <source>
    </source>
</evidence>
<evidence type="ECO:0000269" key="13">
    <source>
    </source>
</evidence>
<evidence type="ECO:0000269" key="14">
    <source>
    </source>
</evidence>
<evidence type="ECO:0000269" key="15">
    <source>
    </source>
</evidence>
<evidence type="ECO:0000269" key="16">
    <source>
    </source>
</evidence>
<evidence type="ECO:0000269" key="17">
    <source>
    </source>
</evidence>
<evidence type="ECO:0000269" key="18">
    <source>
    </source>
</evidence>
<evidence type="ECO:0000305" key="19"/>
<evidence type="ECO:0007744" key="20">
    <source>
        <dbReference type="PDB" id="3JAG"/>
    </source>
</evidence>
<evidence type="ECO:0007744" key="21">
    <source>
        <dbReference type="PDB" id="3JAH"/>
    </source>
</evidence>
<evidence type="ECO:0007744" key="22">
    <source>
        <dbReference type="PDB" id="4D5L"/>
    </source>
</evidence>
<evidence type="ECO:0007744" key="23">
    <source>
        <dbReference type="PDB" id="4D61"/>
    </source>
</evidence>
<evidence type="ECO:0007744" key="24">
    <source>
        <dbReference type="PDB" id="4KZX"/>
    </source>
</evidence>
<evidence type="ECO:0007744" key="25">
    <source>
        <dbReference type="PDB" id="4KZY"/>
    </source>
</evidence>
<evidence type="ECO:0007744" key="26">
    <source>
        <dbReference type="PDB" id="5LZS"/>
    </source>
</evidence>
<evidence type="ECO:0007744" key="27">
    <source>
        <dbReference type="PDB" id="5LZT"/>
    </source>
</evidence>
<evidence type="ECO:0007744" key="28">
    <source>
        <dbReference type="PDB" id="6D90"/>
    </source>
</evidence>
<evidence type="ECO:0007744" key="29">
    <source>
        <dbReference type="PDB" id="6D9J"/>
    </source>
</evidence>
<evidence type="ECO:0007744" key="30">
    <source>
        <dbReference type="PDB" id="6HCF"/>
    </source>
</evidence>
<evidence type="ECO:0007744" key="31">
    <source>
        <dbReference type="PDB" id="6HCJ"/>
    </source>
</evidence>
<evidence type="ECO:0007744" key="32">
    <source>
        <dbReference type="PDB" id="6MTB"/>
    </source>
</evidence>
<evidence type="ECO:0007744" key="33">
    <source>
        <dbReference type="PDB" id="6MTC"/>
    </source>
</evidence>
<evidence type="ECO:0007744" key="34">
    <source>
        <dbReference type="PDB" id="6P5I"/>
    </source>
</evidence>
<evidence type="ECO:0007744" key="35">
    <source>
        <dbReference type="PDB" id="6P5J"/>
    </source>
</evidence>
<evidence type="ECO:0007744" key="36">
    <source>
        <dbReference type="PDB" id="6R5Q"/>
    </source>
</evidence>
<evidence type="ECO:0007744" key="37">
    <source>
        <dbReference type="PDB" id="6R6G"/>
    </source>
</evidence>
<evidence type="ECO:0007744" key="38">
    <source>
        <dbReference type="PDB" id="6SGC"/>
    </source>
</evidence>
<evidence type="ECO:0007744" key="39">
    <source>
        <dbReference type="PDB" id="6W2S"/>
    </source>
</evidence>
<evidence type="ECO:0007744" key="40">
    <source>
        <dbReference type="PDB" id="6W2T"/>
    </source>
</evidence>
<evidence type="ECO:0007744" key="41">
    <source>
        <dbReference type="PDB" id="7OYD"/>
    </source>
</evidence>
<evidence type="ECO:0007744" key="42">
    <source>
        <dbReference type="PDB" id="7SYO"/>
    </source>
</evidence>
<evidence type="ECO:0007744" key="43">
    <source>
        <dbReference type="PDB" id="7SYP"/>
    </source>
</evidence>
<evidence type="ECO:0007744" key="44">
    <source>
        <dbReference type="PDB" id="7UCJ"/>
    </source>
</evidence>
<evidence type="ECO:0007744" key="45">
    <source>
        <dbReference type="PDB" id="7UCK"/>
    </source>
</evidence>
<evidence type="ECO:0007744" key="46">
    <source>
        <dbReference type="PDB" id="7ZJW"/>
    </source>
</evidence>
<evidence type="ECO:0007744" key="47">
    <source>
        <dbReference type="PDB" id="7ZJX"/>
    </source>
</evidence>
<evidence type="ECO:0007829" key="48">
    <source>
        <dbReference type="PDB" id="6P4G"/>
    </source>
</evidence>
<evidence type="ECO:0007829" key="49">
    <source>
        <dbReference type="PDB" id="7JQB"/>
    </source>
</evidence>
<feature type="chain" id="PRO_0000460082" description="Ubiquitin-like FUBI-ribosomal protein eS30 fusion protein">
    <location>
        <begin position="1"/>
        <end position="133"/>
    </location>
</feature>
<feature type="chain" id="PRO_0000460083" description="Ubiquitin-like protein FUBI" evidence="1">
    <location>
        <begin position="1"/>
        <end position="74"/>
    </location>
</feature>
<feature type="chain" id="PRO_0000460084" description="Small ribosomal subunit protein eS30" evidence="1">
    <location>
        <begin position="75"/>
        <end position="133"/>
    </location>
</feature>
<feature type="domain" description="Ubiquitin-like" evidence="3">
    <location>
        <begin position="1"/>
        <end position="74"/>
    </location>
</feature>
<feature type="modified residue" description="N6-succinyllysine" evidence="2">
    <location>
        <position position="125"/>
    </location>
</feature>
<feature type="helix" evidence="48">
    <location>
        <begin position="80"/>
        <end position="82"/>
    </location>
</feature>
<feature type="helix" evidence="49">
    <location>
        <begin position="85"/>
        <end position="89"/>
    </location>
</feature>
<feature type="helix" evidence="49">
    <location>
        <begin position="105"/>
        <end position="116"/>
    </location>
</feature>
<reference key="1">
    <citation type="journal article" date="2011" name="Nature">
        <title>A high-resolution map of human evolutionary constraint using 29 mammals.</title>
        <authorList>
            <person name="Lindblad-Toh K."/>
            <person name="Garber M."/>
            <person name="Zuk O."/>
            <person name="Lin M.F."/>
            <person name="Parker B.J."/>
            <person name="Washietl S."/>
            <person name="Kheradpour P."/>
            <person name="Ernst J."/>
            <person name="Jordan G."/>
            <person name="Mauceli E."/>
            <person name="Ward L.D."/>
            <person name="Lowe C.B."/>
            <person name="Holloway A.K."/>
            <person name="Clamp M."/>
            <person name="Gnerre S."/>
            <person name="Alfoldi J."/>
            <person name="Beal K."/>
            <person name="Chang J."/>
            <person name="Clawson H."/>
            <person name="Cuff J."/>
            <person name="Di Palma F."/>
            <person name="Fitzgerald S."/>
            <person name="Flicek P."/>
            <person name="Guttman M."/>
            <person name="Hubisz M.J."/>
            <person name="Jaffe D.B."/>
            <person name="Jungreis I."/>
            <person name="Kent W.J."/>
            <person name="Kostka D."/>
            <person name="Lara M."/>
            <person name="Martins A.L."/>
            <person name="Massingham T."/>
            <person name="Moltke I."/>
            <person name="Raney B.J."/>
            <person name="Rasmussen M.D."/>
            <person name="Robinson J."/>
            <person name="Stark A."/>
            <person name="Vilella A.J."/>
            <person name="Wen J."/>
            <person name="Xie X."/>
            <person name="Zody M.C."/>
            <person name="Baldwin J."/>
            <person name="Bloom T."/>
            <person name="Chin C.W."/>
            <person name="Heiman D."/>
            <person name="Nicol R."/>
            <person name="Nusbaum C."/>
            <person name="Young S."/>
            <person name="Wilkinson J."/>
            <person name="Worley K.C."/>
            <person name="Kovar C.L."/>
            <person name="Muzny D.M."/>
            <person name="Gibbs R.A."/>
            <person name="Cree A."/>
            <person name="Dihn H.H."/>
            <person name="Fowler G."/>
            <person name="Jhangiani S."/>
            <person name="Joshi V."/>
            <person name="Lee S."/>
            <person name="Lewis L.R."/>
            <person name="Nazareth L.V."/>
            <person name="Okwuonu G."/>
            <person name="Santibanez J."/>
            <person name="Warren W.C."/>
            <person name="Mardis E.R."/>
            <person name="Weinstock G.M."/>
            <person name="Wilson R.K."/>
            <person name="Delehaunty K."/>
            <person name="Dooling D."/>
            <person name="Fronik C."/>
            <person name="Fulton L."/>
            <person name="Fulton B."/>
            <person name="Graves T."/>
            <person name="Minx P."/>
            <person name="Sodergren E."/>
            <person name="Birney E."/>
            <person name="Margulies E.H."/>
            <person name="Herrero J."/>
            <person name="Green E.D."/>
            <person name="Haussler D."/>
            <person name="Siepel A."/>
            <person name="Goldman N."/>
            <person name="Pollard K.S."/>
            <person name="Pedersen J.S."/>
            <person name="Lander E.S."/>
            <person name="Kellis M."/>
        </authorList>
    </citation>
    <scope>NUCLEOTIDE SEQUENCE [LARGE SCALE GENOMIC DNA]</scope>
    <source>
        <strain>Thorbecke</strain>
    </source>
</reference>
<reference evidence="24 25" key="2">
    <citation type="journal article" date="2013" name="Nature">
        <title>The initiation of mammalian protein synthesis and mRNA scanning mechanism.</title>
        <authorList>
            <person name="Lomakin I.B."/>
            <person name="Steitz T.A."/>
        </authorList>
    </citation>
    <scope>X-RAY CRYSTALLOGRAPHY (7.01 ANGSTROMS) OF 79-133 OF 40S RIBOSOME</scope>
    <scope>FUNCTION</scope>
    <scope>SUBUNIT</scope>
    <scope>SUBCELLULAR LOCATION</scope>
</reference>
<reference evidence="22 23" key="3">
    <citation type="journal article" date="2015" name="Mol. Cell">
        <title>Cryo-EM of ribosomal 80S complexes with termination factors reveals the translocated cricket paralysis virus IRES.</title>
        <authorList>
            <person name="Muhs M."/>
            <person name="Hilal T."/>
            <person name="Mielke T."/>
            <person name="Skabkin M.A."/>
            <person name="Sanbonmatsu K.Y."/>
            <person name="Pestova T.V."/>
            <person name="Spahn C.M."/>
        </authorList>
    </citation>
    <scope>STRUCTURE BY ELECTRON MICROSCOPY (9.00 ANGSTROMS) OF 79-133 OF 75-133 OF RIBOSOME</scope>
    <scope>FUNCTION</scope>
    <scope>SUBUNIT</scope>
    <scope>SUBCELLULAR LOCATION</scope>
</reference>
<reference evidence="20 21" key="4">
    <citation type="journal article" date="2015" name="Nature">
        <title>Structural basis for stop codon recognition in eukaryotes.</title>
        <authorList>
            <person name="Brown A."/>
            <person name="Shao S."/>
            <person name="Murray J."/>
            <person name="Hegde R.S."/>
            <person name="Ramakrishnan V."/>
        </authorList>
    </citation>
    <scope>STRUCTURE BY ELECTRON MICROSCOPY (3.45 ANGSTROMS) OF 79-133 OF 77-133 OF RIBOSOME</scope>
    <scope>FUNCTION</scope>
    <scope>SUBCELLULAR LOCATION</scope>
    <scope>SUBUNIT</scope>
</reference>
<reference evidence="26 27" key="5">
    <citation type="journal article" date="2016" name="Cell">
        <title>Decoding mammalian ribosome-mRNA states by translational GTPase complexes.</title>
        <authorList>
            <person name="Shao S."/>
            <person name="Murray J."/>
            <person name="Brown A."/>
            <person name="Taunton J."/>
            <person name="Ramakrishnan V."/>
            <person name="Hegde R.S."/>
        </authorList>
    </citation>
    <scope>STRUCTURE BY ELECTRON MICROSCOPY (3.31 ANGSTROMS) OF 79-133 OF RIBOSOME</scope>
    <scope>FUNCTION</scope>
    <scope>SUBCELLULAR LOCATION</scope>
    <scope>SUBUNIT</scope>
</reference>
<reference evidence="28 29" key="6">
    <citation type="journal article" date="2018" name="Elife">
        <title>Dual tRNA mimicry in the Cricket paralysis virus IRES uncovers an unexpected similarity with the Hepatitis C Virus IRES.</title>
        <authorList>
            <person name="Pisareva V.P."/>
            <person name="Pisarev A.V."/>
            <person name="Fernandez I.S."/>
        </authorList>
    </citation>
    <scope>STRUCTURE BY ELECTRON MICROSCOPY (3.20 ANGSTROMS) OF 79-133 OF RIBOSOME</scope>
    <scope>SUBCELLULAR LOCATION</scope>
    <scope>SUBUNIT</scope>
</reference>
<reference evidence="32 33" key="7">
    <citation type="journal article" date="2018" name="Elife">
        <title>Structures of translationally inactive mammalian ribosomes.</title>
        <authorList>
            <person name="Brown A."/>
            <person name="Baird M.R."/>
            <person name="Yip M.C."/>
            <person name="Murray J."/>
            <person name="Shao S."/>
        </authorList>
    </citation>
    <scope>STRUCTURE BY ELECTRON MICROSCOPY (3.30 ANGSTROMS) OF 79-133 OF RIBOSOME</scope>
    <scope>SUBCELLULAR LOCATION</scope>
    <scope>SUBUNIT</scope>
</reference>
<reference evidence="30 31" key="8">
    <citation type="journal article" date="2018" name="Mol. Cell">
        <title>ZNF598 is a quality control sensor of collided ribosomes.</title>
        <authorList>
            <person name="Juszkiewicz S."/>
            <person name="Chandrasekaran V."/>
            <person name="Lin Z."/>
            <person name="Kraatz S."/>
            <person name="Ramakrishnan V."/>
            <person name="Hegde R.S."/>
        </authorList>
    </citation>
    <scope>STRUCTURE BY ELECTRON MICROSCOPY (3.80 ANGSTROMS) OF 79-133 OF RIBOSOME</scope>
    <scope>SUBCELLULAR LOCATION</scope>
    <scope>SUBUNIT</scope>
</reference>
<reference evidence="36 37" key="9">
    <citation type="journal article" date="2019" name="Elife">
        <title>Structural and mutational analysis of the ribosome-arresting human XBP1u.</title>
        <authorList>
            <person name="Shanmuganathan V."/>
            <person name="Schiller N."/>
            <person name="Magoulopoulou A."/>
            <person name="Cheng J."/>
            <person name="Braunger K."/>
            <person name="Cymer F."/>
            <person name="Berninghausen O."/>
            <person name="Beatrix B."/>
            <person name="Kohno K."/>
            <person name="von Heijne G."/>
            <person name="Beckmann R."/>
        </authorList>
    </citation>
    <scope>STRUCTURE BY ELECTRON MICROSCOPY (3.00 ANGSTROMS) OF 79-133 OF RIBOSOME</scope>
    <scope>SUBCELLULAR LOCATION</scope>
    <scope>SUBUNIT</scope>
</reference>
<reference evidence="34 35" key="10">
    <citation type="journal article" date="2019" name="EMBO J.">
        <title>The Israeli acute paralysis virus IRES captures host ribosomes by mimicking a ribosomal state with hybrid tRNAs.</title>
        <authorList>
            <person name="Acosta-Reyes F."/>
            <person name="Neupane R."/>
            <person name="Frank J."/>
            <person name="Fernandez I.S."/>
        </authorList>
    </citation>
    <scope>STRUCTURE BY ELECTRON MICROSCOPY (3.10 ANGSTROMS) OF 79-133 OF RIBOSOME</scope>
    <scope>SUBCELLULAR LOCATION</scope>
    <scope>SUBUNIT</scope>
</reference>
<reference evidence="38" key="11">
    <citation type="journal article" date="2019" name="Nat. Struct. Mol. Biol.">
        <title>Mechanism of ribosome stalling during translation of a poly(A) tail.</title>
        <authorList>
            <person name="Chandrasekaran V."/>
            <person name="Juszkiewicz S."/>
            <person name="Choi J."/>
            <person name="Puglisi J.D."/>
            <person name="Brown A."/>
            <person name="Shao S."/>
            <person name="Ramakrishnan V."/>
            <person name="Hegde R.S."/>
        </authorList>
    </citation>
    <scope>STRUCTURE BY ELECTRON MICROSCOPY (2.80 ANGSTROMS) OF 79-133 OF RIBOSOME</scope>
    <scope>SUBCELLULAR LOCATION</scope>
    <scope>SUBUNIT</scope>
</reference>
<reference evidence="39 40" key="12">
    <citation type="journal article" date="2020" name="Elife">
        <title>A complex IRES at the 5'-UTR of a viral mRNA assembles a functional 48S complex via an uAUG intermediate.</title>
        <authorList>
            <person name="Neupane R."/>
            <person name="Pisareva V.P."/>
            <person name="Rodriguez C.F."/>
            <person name="Pisarev A.V."/>
            <person name="Fernandez I.S."/>
        </authorList>
    </citation>
    <scope>STRUCTURE BY ELECTRON MICROSCOPY (3.00 ANGSTROMS) OF 79-133 OF RIBOSOME</scope>
    <scope>SUBCELLULAR LOCATION</scope>
    <scope>SUBUNIT</scope>
</reference>
<reference evidence="42 43" key="13">
    <citation type="journal article" date="2022" name="EMBO J.">
        <title>Molecular architecture of 40S translation initiation complexes on the hepatitis C virus IRES.</title>
        <authorList>
            <person name="Brown Z.P."/>
            <person name="Abaeva I.S."/>
            <person name="De S."/>
            <person name="Hellen C.U.T."/>
            <person name="Pestova T.V."/>
            <person name="Frank J."/>
        </authorList>
    </citation>
    <scope>STRUCTURE BY ELECTRON MICROSCOPY (3.50 ANGSTROMS) OF 79-133 OF RIBOSOME</scope>
    <scope>SUBCELLULAR LOCATION</scope>
    <scope>SUBUNIT</scope>
</reference>
<reference evidence="44 45" key="14">
    <citation type="journal article" date="2022" name="Mol. Cell">
        <title>Direct epitranscriptomic regulation of mammalian translation initiation through N4-acetylcytidine.</title>
        <authorList>
            <person name="Arango D."/>
            <person name="Sturgill D."/>
            <person name="Yang R."/>
            <person name="Kanai T."/>
            <person name="Bauer P."/>
            <person name="Roy J."/>
            <person name="Wang Z."/>
            <person name="Hosogane M."/>
            <person name="Schiffers S."/>
            <person name="Oberdoerffer S."/>
        </authorList>
    </citation>
    <scope>STRUCTURE BY ELECTRON MICROSCOPY (2.80 ANGSTROMS) OF 79-133 OF RIBOSOME</scope>
    <scope>SUBCELLULAR LOCATION</scope>
    <scope>SUBUNIT</scope>
</reference>
<reference evidence="46 47" key="15">
    <citation type="journal article" date="2022" name="Science">
        <title>Structure of the mammalian ribosome as it decodes the selenocysteine UGA codon.</title>
        <authorList>
            <person name="Hilal T."/>
            <person name="Killam B.Y."/>
            <person name="Grozdanovic M."/>
            <person name="Dobosz-Bartoszek M."/>
            <person name="Loerke J."/>
            <person name="Buerger J."/>
            <person name="Mielke T."/>
            <person name="Copeland P.R."/>
            <person name="Simonovic M."/>
            <person name="Spahn C.M.T."/>
        </authorList>
    </citation>
    <scope>STRUCTURE BY ELECTRON MICROSCOPY (2.80 ANGSTROMS) OF 79-133 OF RIBOSOME</scope>
    <scope>SUBCELLULAR LOCATION</scope>
    <scope>SUBUNIT</scope>
</reference>
<reference evidence="41" key="16">
    <citation type="journal article" date="2023" name="Nature">
        <title>A molecular network of conserved factors keeps ribosomes dormant in the egg.</title>
        <authorList>
            <person name="Leesch F."/>
            <person name="Lorenzo-Orts L."/>
            <person name="Pribitzer C."/>
            <person name="Grishkovskaya I."/>
            <person name="Roehsner J."/>
            <person name="Chugunova A."/>
            <person name="Matzinger M."/>
            <person name="Roitinger E."/>
            <person name="Belacic K."/>
            <person name="Kandolf S."/>
            <person name="Lin T.Y."/>
            <person name="Mechtler K."/>
            <person name="Meinhart A."/>
            <person name="Haselbach D."/>
            <person name="Pauli A."/>
        </authorList>
    </citation>
    <scope>STRUCTURE BY ELECTRON MICROSCOPY (2.30 ANGSTROMS) OF 79-133 OF RIBOSOME</scope>
    <scope>SUBCELLULAR LOCATION</scope>
    <scope>SUBUNIT</scope>
</reference>
<protein>
    <recommendedName>
        <fullName>Ubiquitin-like FUBI-ribosomal protein eS30 fusion protein</fullName>
    </recommendedName>
    <alternativeName>
        <fullName>FAU ubiquitin like and ribosomal protein S30 fusion</fullName>
    </alternativeName>
    <component>
        <recommendedName>
            <fullName>Ubiquitin-like protein FUBI</fullName>
        </recommendedName>
    </component>
    <component>
        <recommendedName>
            <fullName>Small ribosomal subunit protein eS30</fullName>
        </recommendedName>
        <alternativeName>
            <fullName>40S ribosomal protein S30</fullName>
        </alternativeName>
    </component>
</protein>
<accession>G1T8A2</accession>
<dbReference type="RefSeq" id="XP_002723447.1">
    <property type="nucleotide sequence ID" value="XM_002723401.3"/>
</dbReference>
<dbReference type="PDB" id="3JAG">
    <property type="method" value="EM"/>
    <property type="resolution" value="3.65 A"/>
    <property type="chains" value="ee=77-133"/>
</dbReference>
<dbReference type="PDB" id="3JAH">
    <property type="method" value="EM"/>
    <property type="resolution" value="3.45 A"/>
    <property type="chains" value="ee=77-133"/>
</dbReference>
<dbReference type="PDB" id="3JAI">
    <property type="method" value="EM"/>
    <property type="resolution" value="3.65 A"/>
    <property type="chains" value="ee=77-133"/>
</dbReference>
<dbReference type="PDB" id="4D5L">
    <property type="method" value="EM"/>
    <property type="resolution" value="9.00 A"/>
    <property type="chains" value="e=75-133"/>
</dbReference>
<dbReference type="PDB" id="4D61">
    <property type="method" value="EM"/>
    <property type="resolution" value="9.00 A"/>
    <property type="chains" value="e=75-133"/>
</dbReference>
<dbReference type="PDB" id="4KZX">
    <property type="method" value="X-ray"/>
    <property type="resolution" value="7.81 A"/>
    <property type="chains" value="e=1-133"/>
</dbReference>
<dbReference type="PDB" id="4KZY">
    <property type="method" value="X-ray"/>
    <property type="resolution" value="7.01 A"/>
    <property type="chains" value="e=1-133"/>
</dbReference>
<dbReference type="PDB" id="4KZZ">
    <property type="method" value="X-ray"/>
    <property type="resolution" value="7.03 A"/>
    <property type="chains" value="e=1-133"/>
</dbReference>
<dbReference type="PDB" id="5K0Y">
    <property type="method" value="EM"/>
    <property type="resolution" value="5.80 A"/>
    <property type="chains" value="V=75-133"/>
</dbReference>
<dbReference type="PDB" id="5LZS">
    <property type="method" value="EM"/>
    <property type="resolution" value="3.31 A"/>
    <property type="chains" value="ee=1-133"/>
</dbReference>
<dbReference type="PDB" id="5LZT">
    <property type="method" value="EM"/>
    <property type="resolution" value="3.65 A"/>
    <property type="chains" value="ee=1-133"/>
</dbReference>
<dbReference type="PDB" id="5LZU">
    <property type="method" value="EM"/>
    <property type="resolution" value="3.75 A"/>
    <property type="chains" value="ee=1-133"/>
</dbReference>
<dbReference type="PDB" id="5LZV">
    <property type="method" value="EM"/>
    <property type="resolution" value="3.35 A"/>
    <property type="chains" value="ee=1-133"/>
</dbReference>
<dbReference type="PDB" id="5LZW">
    <property type="method" value="EM"/>
    <property type="resolution" value="3.53 A"/>
    <property type="chains" value="ee=1-133"/>
</dbReference>
<dbReference type="PDB" id="5LZX">
    <property type="method" value="EM"/>
    <property type="resolution" value="3.67 A"/>
    <property type="chains" value="ee=1-133"/>
</dbReference>
<dbReference type="PDB" id="5LZY">
    <property type="method" value="EM"/>
    <property type="resolution" value="3.99 A"/>
    <property type="chains" value="ee=1-133"/>
</dbReference>
<dbReference type="PDB" id="5LZZ">
    <property type="method" value="EM"/>
    <property type="resolution" value="3.47 A"/>
    <property type="chains" value="ee=1-133"/>
</dbReference>
<dbReference type="PDB" id="6D90">
    <property type="method" value="EM"/>
    <property type="resolution" value="3.20 A"/>
    <property type="chains" value="ff=1-133"/>
</dbReference>
<dbReference type="PDB" id="6D9J">
    <property type="method" value="EM"/>
    <property type="resolution" value="3.20 A"/>
    <property type="chains" value="ff=1-133"/>
</dbReference>
<dbReference type="PDB" id="6HCF">
    <property type="method" value="EM"/>
    <property type="resolution" value="3.90 A"/>
    <property type="chains" value="f1=1-133"/>
</dbReference>
<dbReference type="PDB" id="6HCJ">
    <property type="method" value="EM"/>
    <property type="resolution" value="3.80 A"/>
    <property type="chains" value="f2=1-133"/>
</dbReference>
<dbReference type="PDB" id="6HCM">
    <property type="method" value="EM"/>
    <property type="resolution" value="6.80 A"/>
    <property type="chains" value="f1=1-133"/>
</dbReference>
<dbReference type="PDB" id="6HCQ">
    <property type="method" value="EM"/>
    <property type="resolution" value="6.50 A"/>
    <property type="chains" value="f2=1-133"/>
</dbReference>
<dbReference type="PDB" id="6MTB">
    <property type="method" value="EM"/>
    <property type="resolution" value="3.60 A"/>
    <property type="chains" value="ee=79-133"/>
</dbReference>
<dbReference type="PDB" id="6MTC">
    <property type="method" value="EM"/>
    <property type="resolution" value="3.40 A"/>
    <property type="chains" value="ee=79-133"/>
</dbReference>
<dbReference type="PDB" id="6MTD">
    <property type="method" value="EM"/>
    <property type="resolution" value="3.30 A"/>
    <property type="chains" value="ee=79-133"/>
</dbReference>
<dbReference type="PDB" id="6MTE">
    <property type="method" value="EM"/>
    <property type="resolution" value="3.40 A"/>
    <property type="chains" value="ee=79-133"/>
</dbReference>
<dbReference type="PDB" id="6P4G">
    <property type="method" value="EM"/>
    <property type="resolution" value="3.10 A"/>
    <property type="chains" value="f=1-133"/>
</dbReference>
<dbReference type="PDB" id="6P4H">
    <property type="method" value="EM"/>
    <property type="resolution" value="3.20 A"/>
    <property type="chains" value="f=1-133"/>
</dbReference>
<dbReference type="PDB" id="6P5I">
    <property type="method" value="EM"/>
    <property type="resolution" value="3.10 A"/>
    <property type="chains" value="f=1-133"/>
</dbReference>
<dbReference type="PDB" id="6P5J">
    <property type="method" value="EM"/>
    <property type="resolution" value="3.10 A"/>
    <property type="chains" value="f=1-133"/>
</dbReference>
<dbReference type="PDB" id="6P5K">
    <property type="method" value="EM"/>
    <property type="resolution" value="3.10 A"/>
    <property type="chains" value="f=1-133"/>
</dbReference>
<dbReference type="PDB" id="6P5N">
    <property type="method" value="EM"/>
    <property type="resolution" value="3.20 A"/>
    <property type="chains" value="f=1-133"/>
</dbReference>
<dbReference type="PDB" id="6R5Q">
    <property type="method" value="EM"/>
    <property type="resolution" value="3.00 A"/>
    <property type="chains" value="AA=79-133"/>
</dbReference>
<dbReference type="PDB" id="6R6G">
    <property type="method" value="EM"/>
    <property type="resolution" value="3.70 A"/>
    <property type="chains" value="AA=79-133"/>
</dbReference>
<dbReference type="PDB" id="6R6P">
    <property type="method" value="EM"/>
    <property type="resolution" value="3.10 A"/>
    <property type="chains" value="AA=79-133"/>
</dbReference>
<dbReference type="PDB" id="6R7Q">
    <property type="method" value="EM"/>
    <property type="resolution" value="3.90 A"/>
    <property type="chains" value="AA=79-133"/>
</dbReference>
<dbReference type="PDB" id="6SGC">
    <property type="method" value="EM"/>
    <property type="resolution" value="2.80 A"/>
    <property type="chains" value="f1=1-133"/>
</dbReference>
<dbReference type="PDB" id="6W2S">
    <property type="method" value="EM"/>
    <property type="resolution" value="3.00 A"/>
    <property type="chains" value="f=1-133"/>
</dbReference>
<dbReference type="PDB" id="6W2T">
    <property type="method" value="EM"/>
    <property type="resolution" value="3.36 A"/>
    <property type="chains" value="f=1-133"/>
</dbReference>
<dbReference type="PDB" id="6YAL">
    <property type="method" value="EM"/>
    <property type="resolution" value="3.00 A"/>
    <property type="chains" value="i=1-133"/>
</dbReference>
<dbReference type="PDB" id="6YAM">
    <property type="method" value="EM"/>
    <property type="resolution" value="3.60 A"/>
    <property type="chains" value="i=75-133"/>
</dbReference>
<dbReference type="PDB" id="6YAN">
    <property type="method" value="EM"/>
    <property type="resolution" value="3.48 A"/>
    <property type="chains" value="i=75-133"/>
</dbReference>
<dbReference type="PDB" id="7JQB">
    <property type="method" value="EM"/>
    <property type="resolution" value="2.70 A"/>
    <property type="chains" value="f=1-133"/>
</dbReference>
<dbReference type="PDB" id="7JQC">
    <property type="method" value="EM"/>
    <property type="resolution" value="3.30 A"/>
    <property type="chains" value="f=1-133"/>
</dbReference>
<dbReference type="PDB" id="7MDZ">
    <property type="method" value="EM"/>
    <property type="resolution" value="3.20 A"/>
    <property type="chains" value="ee=1-133"/>
</dbReference>
<dbReference type="PDB" id="7NWG">
    <property type="method" value="EM"/>
    <property type="resolution" value="3.80 A"/>
    <property type="chains" value="f2=1-133"/>
</dbReference>
<dbReference type="PDB" id="7NWH">
    <property type="method" value="EM"/>
    <property type="resolution" value="4.10 A"/>
    <property type="chains" value="ee=1-133"/>
</dbReference>
<dbReference type="PDB" id="7NWI">
    <property type="method" value="EM"/>
    <property type="resolution" value="3.13 A"/>
    <property type="chains" value="ee=1-133"/>
</dbReference>
<dbReference type="PDB" id="7O7Y">
    <property type="method" value="EM"/>
    <property type="resolution" value="2.20 A"/>
    <property type="chains" value="AD=1-133"/>
</dbReference>
<dbReference type="PDB" id="7O7Z">
    <property type="method" value="EM"/>
    <property type="resolution" value="2.40 A"/>
    <property type="chains" value="AD=1-133"/>
</dbReference>
<dbReference type="PDB" id="7O80">
    <property type="method" value="EM"/>
    <property type="resolution" value="2.90 A"/>
    <property type="chains" value="AD=1-133"/>
</dbReference>
<dbReference type="PDB" id="7O81">
    <property type="method" value="EM"/>
    <property type="resolution" value="3.10 A"/>
    <property type="chains" value="AD=1-133"/>
</dbReference>
<dbReference type="PDB" id="7OYD">
    <property type="method" value="EM"/>
    <property type="resolution" value="2.30 A"/>
    <property type="chains" value="Ee=1-133"/>
</dbReference>
<dbReference type="PDB" id="7SYG">
    <property type="method" value="EM"/>
    <property type="resolution" value="4.30 A"/>
    <property type="chains" value="f=1-133"/>
</dbReference>
<dbReference type="PDB" id="7SYH">
    <property type="method" value="EM"/>
    <property type="resolution" value="4.60 A"/>
    <property type="chains" value="f=1-133"/>
</dbReference>
<dbReference type="PDB" id="7SYI">
    <property type="method" value="EM"/>
    <property type="resolution" value="4.50 A"/>
    <property type="chains" value="f=1-133"/>
</dbReference>
<dbReference type="PDB" id="7SYJ">
    <property type="method" value="EM"/>
    <property type="resolution" value="4.80 A"/>
    <property type="chains" value="f=1-133"/>
</dbReference>
<dbReference type="PDB" id="7SYK">
    <property type="method" value="EM"/>
    <property type="resolution" value="4.20 A"/>
    <property type="chains" value="f=1-133"/>
</dbReference>
<dbReference type="PDB" id="7SYL">
    <property type="method" value="EM"/>
    <property type="resolution" value="4.50 A"/>
    <property type="chains" value="f=1-133"/>
</dbReference>
<dbReference type="PDB" id="7SYM">
    <property type="method" value="EM"/>
    <property type="resolution" value="4.80 A"/>
    <property type="chains" value="f=1-133"/>
</dbReference>
<dbReference type="PDB" id="7SYN">
    <property type="method" value="EM"/>
    <property type="resolution" value="4.00 A"/>
    <property type="chains" value="f=1-133"/>
</dbReference>
<dbReference type="PDB" id="7SYO">
    <property type="method" value="EM"/>
    <property type="resolution" value="4.60 A"/>
    <property type="chains" value="f=1-133"/>
</dbReference>
<dbReference type="PDB" id="7SYP">
    <property type="method" value="EM"/>
    <property type="resolution" value="4.00 A"/>
    <property type="chains" value="f=1-133"/>
</dbReference>
<dbReference type="PDB" id="7SYQ">
    <property type="method" value="EM"/>
    <property type="resolution" value="3.80 A"/>
    <property type="chains" value="f=1-133"/>
</dbReference>
<dbReference type="PDB" id="7SYR">
    <property type="method" value="EM"/>
    <property type="resolution" value="3.60 A"/>
    <property type="chains" value="f=1-133"/>
</dbReference>
<dbReference type="PDB" id="7SYS">
    <property type="method" value="EM"/>
    <property type="resolution" value="3.50 A"/>
    <property type="chains" value="f=1-133"/>
</dbReference>
<dbReference type="PDB" id="7SYT">
    <property type="method" value="EM"/>
    <property type="resolution" value="4.40 A"/>
    <property type="chains" value="f=1-133"/>
</dbReference>
<dbReference type="PDB" id="7SYU">
    <property type="method" value="EM"/>
    <property type="resolution" value="4.60 A"/>
    <property type="chains" value="f=1-133"/>
</dbReference>
<dbReference type="PDB" id="7SYV">
    <property type="method" value="EM"/>
    <property type="resolution" value="3.90 A"/>
    <property type="chains" value="f=1-133"/>
</dbReference>
<dbReference type="PDB" id="7SYW">
    <property type="method" value="EM"/>
    <property type="resolution" value="3.70 A"/>
    <property type="chains" value="f=1-133"/>
</dbReference>
<dbReference type="PDB" id="7SYX">
    <property type="method" value="EM"/>
    <property type="resolution" value="3.70 A"/>
    <property type="chains" value="f=1-133"/>
</dbReference>
<dbReference type="PDB" id="7TOQ">
    <property type="method" value="EM"/>
    <property type="resolution" value="3.10 A"/>
    <property type="chains" value="AS30=79-133"/>
</dbReference>
<dbReference type="PDB" id="7TOR">
    <property type="method" value="EM"/>
    <property type="resolution" value="2.90 A"/>
    <property type="chains" value="AS30=79-133"/>
</dbReference>
<dbReference type="PDB" id="7UCJ">
    <property type="method" value="EM"/>
    <property type="resolution" value="3.10 A"/>
    <property type="chains" value="Ee=79-133"/>
</dbReference>
<dbReference type="PDB" id="7UCK">
    <property type="method" value="EM"/>
    <property type="resolution" value="2.80 A"/>
    <property type="chains" value="Ee=79-133"/>
</dbReference>
<dbReference type="PDB" id="7ZJW">
    <property type="method" value="EM"/>
    <property type="resolution" value="2.80 A"/>
    <property type="chains" value="SE=1-133"/>
</dbReference>
<dbReference type="PDB" id="7ZJX">
    <property type="method" value="EM"/>
    <property type="resolution" value="3.10 A"/>
    <property type="chains" value="SE=1-133"/>
</dbReference>
<dbReference type="PDB" id="8BTK">
    <property type="method" value="EM"/>
    <property type="resolution" value="3.50 A"/>
    <property type="chains" value="AD=1-133"/>
</dbReference>
<dbReference type="PDB" id="8P03">
    <property type="method" value="EM"/>
    <property type="resolution" value="3.04 A"/>
    <property type="chains" value="i=1-133"/>
</dbReference>
<dbReference type="PDB" id="8P09">
    <property type="method" value="EM"/>
    <property type="resolution" value="3.30 A"/>
    <property type="chains" value="i=1-133"/>
</dbReference>
<dbReference type="PDB" id="8P2K">
    <property type="method" value="EM"/>
    <property type="resolution" value="2.90 A"/>
    <property type="chains" value="AD=1-133"/>
</dbReference>
<dbReference type="PDB" id="8SCB">
    <property type="method" value="EM"/>
    <property type="resolution" value="2.50 A"/>
    <property type="chains" value="ee=1-133"/>
</dbReference>
<dbReference type="PDB" id="8VFT">
    <property type="method" value="EM"/>
    <property type="resolution" value="3.30 A"/>
    <property type="chains" value="ee=1-133"/>
</dbReference>
<dbReference type="PDB" id="9BDL">
    <property type="method" value="EM"/>
    <property type="resolution" value="2.80 A"/>
    <property type="chains" value="AS30=79-133"/>
</dbReference>
<dbReference type="PDB" id="9BDN">
    <property type="method" value="EM"/>
    <property type="resolution" value="3.10 A"/>
    <property type="chains" value="AS30=79-133"/>
</dbReference>
<dbReference type="PDB" id="9BDP">
    <property type="method" value="EM"/>
    <property type="resolution" value="3.70 A"/>
    <property type="chains" value="AS30=79-133"/>
</dbReference>
<dbReference type="PDB" id="9F1B">
    <property type="method" value="EM"/>
    <property type="resolution" value="3.01 A"/>
    <property type="chains" value="AD=1-133"/>
</dbReference>
<dbReference type="PDB" id="9F1C">
    <property type="method" value="EM"/>
    <property type="resolution" value="3.78 A"/>
    <property type="chains" value="AD=1-133"/>
</dbReference>
<dbReference type="PDB" id="9F1D">
    <property type="method" value="EM"/>
    <property type="resolution" value="3.26 A"/>
    <property type="chains" value="AD=1-133"/>
</dbReference>
<dbReference type="PDBsum" id="3JAG"/>
<dbReference type="PDBsum" id="3JAH"/>
<dbReference type="PDBsum" id="3JAI"/>
<dbReference type="PDBsum" id="4D5L"/>
<dbReference type="PDBsum" id="4D61"/>
<dbReference type="PDBsum" id="4KZX"/>
<dbReference type="PDBsum" id="4KZY"/>
<dbReference type="PDBsum" id="4KZZ"/>
<dbReference type="PDBsum" id="5K0Y"/>
<dbReference type="PDBsum" id="5LZS"/>
<dbReference type="PDBsum" id="5LZT"/>
<dbReference type="PDBsum" id="5LZU"/>
<dbReference type="PDBsum" id="5LZV"/>
<dbReference type="PDBsum" id="5LZW"/>
<dbReference type="PDBsum" id="5LZX"/>
<dbReference type="PDBsum" id="5LZY"/>
<dbReference type="PDBsum" id="5LZZ"/>
<dbReference type="PDBsum" id="6D90"/>
<dbReference type="PDBsum" id="6D9J"/>
<dbReference type="PDBsum" id="6HCF"/>
<dbReference type="PDBsum" id="6HCJ"/>
<dbReference type="PDBsum" id="6HCM"/>
<dbReference type="PDBsum" id="6HCQ"/>
<dbReference type="PDBsum" id="6MTB"/>
<dbReference type="PDBsum" id="6MTC"/>
<dbReference type="PDBsum" id="6MTD"/>
<dbReference type="PDBsum" id="6MTE"/>
<dbReference type="PDBsum" id="6P4G"/>
<dbReference type="PDBsum" id="6P4H"/>
<dbReference type="PDBsum" id="6P5I"/>
<dbReference type="PDBsum" id="6P5J"/>
<dbReference type="PDBsum" id="6P5K"/>
<dbReference type="PDBsum" id="6P5N"/>
<dbReference type="PDBsum" id="6R5Q"/>
<dbReference type="PDBsum" id="6R6G"/>
<dbReference type="PDBsum" id="6R6P"/>
<dbReference type="PDBsum" id="6R7Q"/>
<dbReference type="PDBsum" id="6SGC"/>
<dbReference type="PDBsum" id="6W2S"/>
<dbReference type="PDBsum" id="6W2T"/>
<dbReference type="PDBsum" id="6YAL"/>
<dbReference type="PDBsum" id="6YAM"/>
<dbReference type="PDBsum" id="6YAN"/>
<dbReference type="PDBsum" id="7JQB"/>
<dbReference type="PDBsum" id="7JQC"/>
<dbReference type="PDBsum" id="7MDZ"/>
<dbReference type="PDBsum" id="7NWG"/>
<dbReference type="PDBsum" id="7NWH"/>
<dbReference type="PDBsum" id="7NWI"/>
<dbReference type="PDBsum" id="7O7Y"/>
<dbReference type="PDBsum" id="7O7Z"/>
<dbReference type="PDBsum" id="7O80"/>
<dbReference type="PDBsum" id="7O81"/>
<dbReference type="PDBsum" id="7OYD"/>
<dbReference type="PDBsum" id="7SYG"/>
<dbReference type="PDBsum" id="7SYH"/>
<dbReference type="PDBsum" id="7SYI"/>
<dbReference type="PDBsum" id="7SYJ"/>
<dbReference type="PDBsum" id="7SYK"/>
<dbReference type="PDBsum" id="7SYL"/>
<dbReference type="PDBsum" id="7SYM"/>
<dbReference type="PDBsum" id="7SYN"/>
<dbReference type="PDBsum" id="7SYO"/>
<dbReference type="PDBsum" id="7SYP"/>
<dbReference type="PDBsum" id="7SYQ"/>
<dbReference type="PDBsum" id="7SYR"/>
<dbReference type="PDBsum" id="7SYS"/>
<dbReference type="PDBsum" id="7SYT"/>
<dbReference type="PDBsum" id="7SYU"/>
<dbReference type="PDBsum" id="7SYV"/>
<dbReference type="PDBsum" id="7SYW"/>
<dbReference type="PDBsum" id="7SYX"/>
<dbReference type="PDBsum" id="7TOQ"/>
<dbReference type="PDBsum" id="7TOR"/>
<dbReference type="PDBsum" id="7UCJ"/>
<dbReference type="PDBsum" id="7UCK"/>
<dbReference type="PDBsum" id="7ZJW"/>
<dbReference type="PDBsum" id="7ZJX"/>
<dbReference type="PDBsum" id="8BTK"/>
<dbReference type="PDBsum" id="8P03"/>
<dbReference type="PDBsum" id="8P09"/>
<dbReference type="PDBsum" id="8P2K"/>
<dbReference type="PDBsum" id="8SCB"/>
<dbReference type="PDBsum" id="8VFT"/>
<dbReference type="PDBsum" id="9BDL"/>
<dbReference type="PDBsum" id="9BDN"/>
<dbReference type="PDBsum" id="9BDP"/>
<dbReference type="PDBsum" id="9F1B"/>
<dbReference type="PDBsum" id="9F1C"/>
<dbReference type="PDBsum" id="9F1D"/>
<dbReference type="EMDB" id="EMD-0192"/>
<dbReference type="EMDB" id="EMD-0194"/>
<dbReference type="EMDB" id="EMD-0195"/>
<dbReference type="EMDB" id="EMD-0197"/>
<dbReference type="EMDB" id="EMD-10181"/>
<dbReference type="EMDB" id="EMD-10760"/>
<dbReference type="EMDB" id="EMD-10761"/>
<dbReference type="EMDB" id="EMD-10762"/>
<dbReference type="EMDB" id="EMD-12631"/>
<dbReference type="EMDB" id="EMD-12632"/>
<dbReference type="EMDB" id="EMD-12633"/>
<dbReference type="EMDB" id="EMD-12756"/>
<dbReference type="EMDB" id="EMD-12757"/>
<dbReference type="EMDB" id="EMD-12758"/>
<dbReference type="EMDB" id="EMD-12759"/>
<dbReference type="EMDB" id="EMD-13114"/>
<dbReference type="EMDB" id="EMD-14751"/>
<dbReference type="EMDB" id="EMD-14752"/>
<dbReference type="EMDB" id="EMD-16232"/>
<dbReference type="EMDB" id="EMD-17329"/>
<dbReference type="EMDB" id="EMD-17330"/>
<dbReference type="EMDB" id="EMD-17367"/>
<dbReference type="EMDB" id="EMD-20248"/>
<dbReference type="EMDB" id="EMD-20249"/>
<dbReference type="EMDB" id="EMD-20255"/>
<dbReference type="EMDB" id="EMD-20256"/>
<dbReference type="EMDB" id="EMD-20257"/>
<dbReference type="EMDB" id="EMD-20258"/>
<dbReference type="EMDB" id="EMD-21529"/>
<dbReference type="EMDB" id="EMD-21530"/>
<dbReference type="EMDB" id="EMD-22432"/>
<dbReference type="EMDB" id="EMD-22433"/>
<dbReference type="EMDB" id="EMD-23785"/>
<dbReference type="EMDB" id="EMD-25527"/>
<dbReference type="EMDB" id="EMD-25528"/>
<dbReference type="EMDB" id="EMD-25529"/>
<dbReference type="EMDB" id="EMD-25530"/>
<dbReference type="EMDB" id="EMD-25531"/>
<dbReference type="EMDB" id="EMD-25532"/>
<dbReference type="EMDB" id="EMD-25533"/>
<dbReference type="EMDB" id="EMD-25534"/>
<dbReference type="EMDB" id="EMD-25535"/>
<dbReference type="EMDB" id="EMD-25536"/>
<dbReference type="EMDB" id="EMD-25537"/>
<dbReference type="EMDB" id="EMD-25538"/>
<dbReference type="EMDB" id="EMD-25539"/>
<dbReference type="EMDB" id="EMD-25540"/>
<dbReference type="EMDB" id="EMD-25541"/>
<dbReference type="EMDB" id="EMD-25542"/>
<dbReference type="EMDB" id="EMD-25543"/>
<dbReference type="EMDB" id="EMD-25544"/>
<dbReference type="EMDB" id="EMD-26035"/>
<dbReference type="EMDB" id="EMD-26036"/>
<dbReference type="EMDB" id="EMD-26444"/>
<dbReference type="EMDB" id="EMD-26445"/>
<dbReference type="EMDB" id="EMD-40344"/>
<dbReference type="EMDB" id="EMD-4130"/>
<dbReference type="EMDB" id="EMD-4131"/>
<dbReference type="EMDB" id="EMD-4132"/>
<dbReference type="EMDB" id="EMD-4133"/>
<dbReference type="EMDB" id="EMD-4134"/>
<dbReference type="EMDB" id="EMD-4135"/>
<dbReference type="EMDB" id="EMD-4136"/>
<dbReference type="EMDB" id="EMD-4137"/>
<dbReference type="EMDB" id="EMD-43189"/>
<dbReference type="EMDB" id="EMD-44461"/>
<dbReference type="EMDB" id="EMD-44463"/>
<dbReference type="EMDB" id="EMD-44464"/>
<dbReference type="EMDB" id="EMD-4729"/>
<dbReference type="EMDB" id="EMD-4735"/>
<dbReference type="EMDB" id="EMD-4737"/>
<dbReference type="EMDB" id="EMD-4745"/>
<dbReference type="EMDB" id="EMD-50124"/>
<dbReference type="EMDB" id="EMD-50125"/>
<dbReference type="EMDB" id="EMD-50126"/>
<dbReference type="EMDB" id="EMD-7834"/>
<dbReference type="EMDB" id="EMD-7836"/>
<dbReference type="EMDB" id="EMD-8190"/>
<dbReference type="EMDB" id="EMD-9237"/>
<dbReference type="EMDB" id="EMD-9239"/>
<dbReference type="EMDB" id="EMD-9240"/>
<dbReference type="EMDB" id="EMD-9242"/>
<dbReference type="SMR" id="G1T8A2"/>
<dbReference type="IntAct" id="G1T8A2">
    <property type="interactions" value="1"/>
</dbReference>
<dbReference type="PaxDb" id="9986-ENSOCUP00000012787"/>
<dbReference type="Ensembl" id="ENSOCUT00000014874.2">
    <property type="protein sequence ID" value="ENSOCUP00000012787.2"/>
    <property type="gene ID" value="ENSOCUG00000014878.3"/>
</dbReference>
<dbReference type="GeneID" id="100354401"/>
<dbReference type="KEGG" id="ocu:100354401"/>
<dbReference type="CTD" id="2197"/>
<dbReference type="eggNOG" id="KOG0001">
    <property type="taxonomic scope" value="Eukaryota"/>
</dbReference>
<dbReference type="eggNOG" id="KOG0009">
    <property type="taxonomic scope" value="Eukaryota"/>
</dbReference>
<dbReference type="GeneTree" id="ENSGT00390000007479"/>
<dbReference type="HOGENOM" id="CLU_010412_5_0_1"/>
<dbReference type="OMA" id="FRRIQYT"/>
<dbReference type="OrthoDB" id="199599at2759"/>
<dbReference type="TreeFam" id="TF313779"/>
<dbReference type="EvolutionaryTrace" id="G1T8A2"/>
<dbReference type="Proteomes" id="UP000001811">
    <property type="component" value="Unplaced"/>
</dbReference>
<dbReference type="Bgee" id="ENSOCUG00000014878">
    <property type="expression patterns" value="Expressed in uterus and 17 other cell types or tissues"/>
</dbReference>
<dbReference type="GO" id="GO:0022627">
    <property type="term" value="C:cytosolic small ribosomal subunit"/>
    <property type="evidence" value="ECO:0007669"/>
    <property type="project" value="TreeGrafter"/>
</dbReference>
<dbReference type="GO" id="GO:0005634">
    <property type="term" value="C:nucleus"/>
    <property type="evidence" value="ECO:0007669"/>
    <property type="project" value="UniProtKB-SubCell"/>
</dbReference>
<dbReference type="GO" id="GO:0003735">
    <property type="term" value="F:structural constituent of ribosome"/>
    <property type="evidence" value="ECO:0007669"/>
    <property type="project" value="InterPro"/>
</dbReference>
<dbReference type="GO" id="GO:0006412">
    <property type="term" value="P:translation"/>
    <property type="evidence" value="ECO:0007669"/>
    <property type="project" value="InterPro"/>
</dbReference>
<dbReference type="CDD" id="cd01793">
    <property type="entry name" value="Ubl_FUBI"/>
    <property type="match status" value="1"/>
</dbReference>
<dbReference type="FunFam" id="3.10.20.90:FF:000114">
    <property type="entry name" value="40S ribosomal protein S30"/>
    <property type="match status" value="1"/>
</dbReference>
<dbReference type="Gene3D" id="3.10.20.90">
    <property type="entry name" value="Phosphatidylinositol 3-kinase Catalytic Subunit, Chain A, domain 1"/>
    <property type="match status" value="1"/>
</dbReference>
<dbReference type="InterPro" id="IPR039415">
    <property type="entry name" value="FUBI"/>
</dbReference>
<dbReference type="InterPro" id="IPR006846">
    <property type="entry name" value="Ribosomal_eS30"/>
</dbReference>
<dbReference type="InterPro" id="IPR000626">
    <property type="entry name" value="Ubiquitin-like_dom"/>
</dbReference>
<dbReference type="InterPro" id="IPR029071">
    <property type="entry name" value="Ubiquitin-like_domsf"/>
</dbReference>
<dbReference type="InterPro" id="IPR019954">
    <property type="entry name" value="Ubiquitin_CS"/>
</dbReference>
<dbReference type="InterPro" id="IPR019956">
    <property type="entry name" value="Ubiquitin_dom"/>
</dbReference>
<dbReference type="PANTHER" id="PTHR12650">
    <property type="entry name" value="40S RIBOSOMAL PROTEIN S30/UBIQUITIN-LIKE PROTEIN FUBI"/>
    <property type="match status" value="1"/>
</dbReference>
<dbReference type="PANTHER" id="PTHR12650:SF15">
    <property type="entry name" value="RIBOSOMAL PROTEIN S30, ISOFORM A"/>
    <property type="match status" value="1"/>
</dbReference>
<dbReference type="Pfam" id="PF04758">
    <property type="entry name" value="Ribosomal_S30"/>
    <property type="match status" value="1"/>
</dbReference>
<dbReference type="Pfam" id="PF00240">
    <property type="entry name" value="ubiquitin"/>
    <property type="match status" value="1"/>
</dbReference>
<dbReference type="PRINTS" id="PR00348">
    <property type="entry name" value="UBIQUITIN"/>
</dbReference>
<dbReference type="SMART" id="SM00213">
    <property type="entry name" value="UBQ"/>
    <property type="match status" value="1"/>
</dbReference>
<dbReference type="SUPFAM" id="SSF54236">
    <property type="entry name" value="Ubiquitin-like"/>
    <property type="match status" value="1"/>
</dbReference>
<dbReference type="PROSITE" id="PS00299">
    <property type="entry name" value="UBIQUITIN_1"/>
    <property type="match status" value="1"/>
</dbReference>
<dbReference type="PROSITE" id="PS50053">
    <property type="entry name" value="UBIQUITIN_2"/>
    <property type="match status" value="1"/>
</dbReference>
<comment type="function">
    <molecule>Ubiquitin-like protein FUBI</molecule>
    <text evidence="1">May have pro-apoptotic activity.</text>
</comment>
<comment type="function">
    <molecule>Small ribosomal subunit protein eS30</molecule>
    <text evidence="4 5 6 7">Component of the 40S subunit of the ribosome (PubMed:23873042, PubMed:25601755, PubMed:26245381, PubMed:27863242). Contributes to the assembly and function of 40S ribosomal subunits (PubMed:23873042, PubMed:25601755, PubMed:26245381, PubMed:27863242).</text>
</comment>
<comment type="subunit">
    <molecule>Small ribosomal subunit protein eS30</molecule>
    <text evidence="4 5 6 7 8 9 10 11 12 13 14 15 16 17 18">Component of the 40S subunit of the ribosome.</text>
</comment>
<comment type="subcellular location">
    <molecule>Small ribosomal subunit protein eS30</molecule>
    <subcellularLocation>
        <location evidence="4 5 6 7 8 9 10 11 12 13 14 15 16 17 18">Cytoplasm</location>
    </subcellularLocation>
    <subcellularLocation>
        <location evidence="1">Nucleus</location>
    </subcellularLocation>
</comment>
<comment type="PTM">
    <text evidence="1">FUBI is cleaved from ribosomal protein S30 by the deubiquitinase USP36 before the assembly of ribosomal protein S30 into pre-40S ribosomal particles. FUBI removal from ribosomal protein S30 is a crucial event for the final maturation of pre-40S particles.</text>
</comment>
<comment type="miscellaneous">
    <text evidence="1">FAU encodes a fusion protein consisting of the ubiquitin-like protein FUBI at the N terminus and ribosomal protein S30 at the C terminus.</text>
</comment>
<comment type="miscellaneous">
    <molecule>Ubiquitin-like protein FUBI</molecule>
    <text evidence="1">Lacks the typical lysine residues that participate in Ub's polyubiquitination. However contains a C-terminal di-glycine signature after its proteolytic separation from ribosomal protein S30 and could theoretically be conjugated onto target proteins.</text>
</comment>
<comment type="similarity">
    <text evidence="19">In the N-terminal section; belongs to the ubiquitin family.</text>
</comment>
<comment type="similarity">
    <text evidence="19">In the C-terminal section; belongs to the eukaryotic ribosomal protein eS30 family.</text>
</comment>
<keyword id="KW-0002">3D-structure</keyword>
<keyword id="KW-0963">Cytoplasm</keyword>
<keyword id="KW-0539">Nucleus</keyword>
<keyword id="KW-1185">Reference proteome</keyword>
<keyword id="KW-0687">Ribonucleoprotein</keyword>
<keyword id="KW-0689">Ribosomal protein</keyword>
<sequence length="133" mass="14472">MQLFVRAQELHTLEVTGRETVAQIKAHVASLEGIAPEDQVVLLAGTPLEDEATLGQCGVEALSTLEVAGRMLGGKVHGSLARVGKVRGQTLKVAKQEKKKKRTGRAKRRMQYNRRFVNVVPTFGKKKGPNANS</sequence>
<proteinExistence type="evidence at protein level"/>